<comment type="subcellular location">
    <subcellularLocation>
        <location evidence="4">Secreted</location>
    </subcellularLocation>
</comment>
<comment type="similarity">
    <text evidence="3">Belongs to the plant self-incompatibility (S1) protein family.</text>
</comment>
<proteinExistence type="inferred from homology"/>
<reference key="1">
    <citation type="journal article" date="2000" name="DNA Res.">
        <title>Structural analysis of Arabidopsis thaliana chromosome 3. I. Sequence features of the regions of 4,504,864 bp covered by sixty P1 and TAC clones.</title>
        <authorList>
            <person name="Sato S."/>
            <person name="Nakamura Y."/>
            <person name="Kaneko T."/>
            <person name="Katoh T."/>
            <person name="Asamizu E."/>
            <person name="Tabata S."/>
        </authorList>
    </citation>
    <scope>NUCLEOTIDE SEQUENCE [LARGE SCALE GENOMIC DNA]</scope>
    <source>
        <strain>cv. Columbia</strain>
    </source>
</reference>
<reference key="2">
    <citation type="journal article" date="2017" name="Plant J.">
        <title>Araport11: a complete reannotation of the Arabidopsis thaliana reference genome.</title>
        <authorList>
            <person name="Cheng C.Y."/>
            <person name="Krishnakumar V."/>
            <person name="Chan A.P."/>
            <person name="Thibaud-Nissen F."/>
            <person name="Schobel S."/>
            <person name="Town C.D."/>
        </authorList>
    </citation>
    <scope>GENOME REANNOTATION</scope>
    <source>
        <strain>cv. Columbia</strain>
    </source>
</reference>
<reference key="3">
    <citation type="journal article" date="1999" name="Plant Mol. Biol.">
        <title>Analysis of Arabidopsis genome sequence reveals a large new gene family in plants.</title>
        <authorList>
            <person name="Ride J.P."/>
            <person name="Davies E.M."/>
            <person name="Franklin F.C.H."/>
            <person name="Marshall D.F."/>
        </authorList>
    </citation>
    <scope>GENE FAMILY</scope>
    <scope>NOMENCLATURE</scope>
    <source>
        <strain>cv. Columbia</strain>
    </source>
</reference>
<dbReference type="EMBL" id="AB016889">
    <property type="protein sequence ID" value="BAB01235.1"/>
    <property type="molecule type" value="Genomic_DNA"/>
</dbReference>
<dbReference type="EMBL" id="CP002686">
    <property type="protein sequence ID" value="AEE77228.1"/>
    <property type="molecule type" value="Genomic_DNA"/>
</dbReference>
<dbReference type="RefSeq" id="NP_189323.1">
    <property type="nucleotide sequence ID" value="NM_113600.2"/>
</dbReference>
<dbReference type="SMR" id="Q9LW22"/>
<dbReference type="iPTMnet" id="Q9LW22"/>
<dbReference type="PaxDb" id="3702-AT3G26880.1"/>
<dbReference type="ProteomicsDB" id="232528"/>
<dbReference type="EnsemblPlants" id="AT3G26880.1">
    <property type="protein sequence ID" value="AT3G26880.1"/>
    <property type="gene ID" value="AT3G26880"/>
</dbReference>
<dbReference type="GeneID" id="822304"/>
<dbReference type="Gramene" id="AT3G26880.1">
    <property type="protein sequence ID" value="AT3G26880.1"/>
    <property type="gene ID" value="AT3G26880"/>
</dbReference>
<dbReference type="KEGG" id="ath:AT3G26880"/>
<dbReference type="Araport" id="AT3G26880"/>
<dbReference type="TAIR" id="AT3G26880"/>
<dbReference type="HOGENOM" id="CLU_125658_3_1_1"/>
<dbReference type="InParanoid" id="Q9LW22"/>
<dbReference type="OMA" id="NTHFYCN"/>
<dbReference type="OrthoDB" id="1727555at2759"/>
<dbReference type="PhylomeDB" id="Q9LW22"/>
<dbReference type="PRO" id="PR:Q9LW22"/>
<dbReference type="Proteomes" id="UP000006548">
    <property type="component" value="Chromosome 3"/>
</dbReference>
<dbReference type="ExpressionAtlas" id="Q9LW22">
    <property type="expression patterns" value="baseline and differential"/>
</dbReference>
<dbReference type="GO" id="GO:0005576">
    <property type="term" value="C:extracellular region"/>
    <property type="evidence" value="ECO:0007669"/>
    <property type="project" value="UniProtKB-SubCell"/>
</dbReference>
<dbReference type="GO" id="GO:0060320">
    <property type="term" value="P:rejection of self pollen"/>
    <property type="evidence" value="ECO:0007669"/>
    <property type="project" value="UniProtKB-KW"/>
</dbReference>
<dbReference type="InterPro" id="IPR010264">
    <property type="entry name" value="Self-incomp_S1"/>
</dbReference>
<dbReference type="PANTHER" id="PTHR31232">
    <property type="match status" value="1"/>
</dbReference>
<dbReference type="PANTHER" id="PTHR31232:SF26">
    <property type="entry name" value="S-PROTEIN HOMOLOG-RELATED"/>
    <property type="match status" value="1"/>
</dbReference>
<dbReference type="Pfam" id="PF05938">
    <property type="entry name" value="Self-incomp_S1"/>
    <property type="match status" value="1"/>
</dbReference>
<feature type="signal peptide" evidence="1">
    <location>
        <begin position="1"/>
        <end position="21"/>
    </location>
</feature>
<feature type="chain" id="PRO_5009348602" description="S-protein homolog 21">
    <location>
        <begin position="22"/>
        <end position="133"/>
    </location>
</feature>
<sequence length="133" mass="15504">MKNLSIFLFVVGLCMISDVYGKKSTITVKNELNPKNKNILKVHCKSKNNDIGVKYLKIGEVMSFSFKTNFWGTTEFWCNLYKGPDYKRYRGITAYQAIGLFAKDGSSYNWLARDDGIYFHKDSLPSYYKTYWL</sequence>
<name>SPH21_ARATH</name>
<protein>
    <recommendedName>
        <fullName evidence="2">S-protein homolog 21</fullName>
    </recommendedName>
</protein>
<organism>
    <name type="scientific">Arabidopsis thaliana</name>
    <name type="common">Mouse-ear cress</name>
    <dbReference type="NCBI Taxonomy" id="3702"/>
    <lineage>
        <taxon>Eukaryota</taxon>
        <taxon>Viridiplantae</taxon>
        <taxon>Streptophyta</taxon>
        <taxon>Embryophyta</taxon>
        <taxon>Tracheophyta</taxon>
        <taxon>Spermatophyta</taxon>
        <taxon>Magnoliopsida</taxon>
        <taxon>eudicotyledons</taxon>
        <taxon>Gunneridae</taxon>
        <taxon>Pentapetalae</taxon>
        <taxon>rosids</taxon>
        <taxon>malvids</taxon>
        <taxon>Brassicales</taxon>
        <taxon>Brassicaceae</taxon>
        <taxon>Camelineae</taxon>
        <taxon>Arabidopsis</taxon>
    </lineage>
</organism>
<gene>
    <name evidence="2" type="primary">SPH21</name>
    <name evidence="5" type="ordered locus">At3g26880</name>
    <name evidence="6" type="ORF">MDJ14.22</name>
</gene>
<keyword id="KW-1185">Reference proteome</keyword>
<keyword id="KW-0964">Secreted</keyword>
<keyword id="KW-0713">Self-incompatibility</keyword>
<keyword id="KW-0732">Signal</keyword>
<evidence type="ECO:0000255" key="1"/>
<evidence type="ECO:0000303" key="2">
    <source>
    </source>
</evidence>
<evidence type="ECO:0000305" key="3"/>
<evidence type="ECO:0000305" key="4">
    <source>
    </source>
</evidence>
<evidence type="ECO:0000312" key="5">
    <source>
        <dbReference type="Araport" id="AT3G26880"/>
    </source>
</evidence>
<evidence type="ECO:0000312" key="6">
    <source>
        <dbReference type="EMBL" id="BAB01235.1"/>
    </source>
</evidence>
<accession>Q9LW22</accession>